<reference key="1">
    <citation type="journal article" date="2007" name="PLoS Genet.">
        <title>Patterns and implications of gene gain and loss in the evolution of Prochlorococcus.</title>
        <authorList>
            <person name="Kettler G.C."/>
            <person name="Martiny A.C."/>
            <person name="Huang K."/>
            <person name="Zucker J."/>
            <person name="Coleman M.L."/>
            <person name="Rodrigue S."/>
            <person name="Chen F."/>
            <person name="Lapidus A."/>
            <person name="Ferriera S."/>
            <person name="Johnson J."/>
            <person name="Steglich C."/>
            <person name="Church G.M."/>
            <person name="Richardson P."/>
            <person name="Chisholm S.W."/>
        </authorList>
    </citation>
    <scope>NUCLEOTIDE SEQUENCE [LARGE SCALE GENOMIC DNA]</scope>
    <source>
        <strain>MIT 9303</strain>
    </source>
</reference>
<name>PURL_PROM3</name>
<gene>
    <name evidence="1" type="primary">purL</name>
    <name type="ordered locus">P9303_00021</name>
</gene>
<protein>
    <recommendedName>
        <fullName evidence="1">Phosphoribosylformylglycinamidine synthase subunit PurL</fullName>
        <shortName evidence="1">FGAM synthase</shortName>
        <ecNumber evidence="1">6.3.5.3</ecNumber>
    </recommendedName>
    <alternativeName>
        <fullName evidence="1">Formylglycinamide ribonucleotide amidotransferase subunit II</fullName>
        <shortName evidence="1">FGAR amidotransferase II</shortName>
        <shortName evidence="1">FGAR-AT II</shortName>
    </alternativeName>
    <alternativeName>
        <fullName evidence="1">Glutamine amidotransferase PurL</fullName>
    </alternativeName>
    <alternativeName>
        <fullName evidence="1">Phosphoribosylformylglycinamidine synthase subunit II</fullName>
    </alternativeName>
</protein>
<comment type="function">
    <text evidence="1">Part of the phosphoribosylformylglycinamidine synthase complex involved in the purines biosynthetic pathway. Catalyzes the ATP-dependent conversion of formylglycinamide ribonucleotide (FGAR) and glutamine to yield formylglycinamidine ribonucleotide (FGAM) and glutamate. The FGAM synthase complex is composed of three subunits. PurQ produces an ammonia molecule by converting glutamine to glutamate. PurL transfers the ammonia molecule to FGAR to form FGAM in an ATP-dependent manner. PurS interacts with PurQ and PurL and is thought to assist in the transfer of the ammonia molecule from PurQ to PurL.</text>
</comment>
<comment type="catalytic activity">
    <reaction evidence="1">
        <text>N(2)-formyl-N(1)-(5-phospho-beta-D-ribosyl)glycinamide + L-glutamine + ATP + H2O = 2-formamido-N(1)-(5-O-phospho-beta-D-ribosyl)acetamidine + L-glutamate + ADP + phosphate + H(+)</text>
        <dbReference type="Rhea" id="RHEA:17129"/>
        <dbReference type="ChEBI" id="CHEBI:15377"/>
        <dbReference type="ChEBI" id="CHEBI:15378"/>
        <dbReference type="ChEBI" id="CHEBI:29985"/>
        <dbReference type="ChEBI" id="CHEBI:30616"/>
        <dbReference type="ChEBI" id="CHEBI:43474"/>
        <dbReference type="ChEBI" id="CHEBI:58359"/>
        <dbReference type="ChEBI" id="CHEBI:147286"/>
        <dbReference type="ChEBI" id="CHEBI:147287"/>
        <dbReference type="ChEBI" id="CHEBI:456216"/>
        <dbReference type="EC" id="6.3.5.3"/>
    </reaction>
</comment>
<comment type="pathway">
    <text evidence="1">Purine metabolism; IMP biosynthesis via de novo pathway; 5-amino-1-(5-phospho-D-ribosyl)imidazole from N(2)-formyl-N(1)-(5-phospho-D-ribosyl)glycinamide: step 1/2.</text>
</comment>
<comment type="subunit">
    <text evidence="1">Monomer. Part of the FGAM synthase complex composed of 1 PurL, 1 PurQ and 2 PurS subunits.</text>
</comment>
<comment type="subcellular location">
    <subcellularLocation>
        <location evidence="1">Cytoplasm</location>
    </subcellularLocation>
</comment>
<comment type="similarity">
    <text evidence="1">Belongs to the FGAMS family.</text>
</comment>
<evidence type="ECO:0000255" key="1">
    <source>
        <dbReference type="HAMAP-Rule" id="MF_00420"/>
    </source>
</evidence>
<sequence>MRVDYDVAAALRHEGLKPDDYDEICRRLQRAPNRVELGMFGVMWSEHCCYRNSRPLLSSFPTTGHRILVGPGENAGVVDLGDGQSLAFKIESHNHPSALEPFQGAATGVGGILRDIFTMGARPIALLNALRFGPLEDERNVGLIEGVVEGIAHYGNCVGVPTVGGEVAFDSSYSGNPLVNAMALGLMETDEIVCSGAHGVGYPVVYVGSTTGRDGMGGASFASAELTKASLDDRPAVQVGDPFLEKGLIEACLEAFKSGDVVAAQDMGAAGLTCSCSEMAAKGGLGIELDLDRVPARELGMTPYEFLLSESQERMLFVVKPGQEQSLMERFIRWGLQAAIVGCVLEKKVVRVLQKGEVVAEVPANALADDTPIDRHELVSDPPLEIQAKWDWQEDLLPVVGLKGINLNSQSHFGSNLSWDEILLKLLDDPTIASKRWVFRQYDHQVQANTVSAPGVSDAAVVRLRPQQGEGSVDEVNRGVAAVVDCPNRWVFLDPERGAIAAVAEAARNLSCVGAEPLAVTDNLNFPSPETPTGYWQLALACRGLSKACKSLSTPVTGGNVSLYNETRLADGEIQPIHPTPVVGMVGLVHDLANVCGQAWLEPGDLIWLLGVPIDTTVAVDPRVSLAGSSYLECIHGLVTGRPPEIDLKLECLVQSFLRNSITEGFVRSAHDLSDGGLAVAVAECCIAGNLGAHLELPSSDARLDRLLFAEGGSRILVSVPSTQAVAWQKVLNQAKTASPGAVFDQYLGVVTADEELLITQAGNRLVQLPLNQLRECFEQAIPRRMGLDLSSSV</sequence>
<feature type="chain" id="PRO_1000050334" description="Phosphoribosylformylglycinamidine synthase subunit PurL">
    <location>
        <begin position="1"/>
        <end position="794"/>
    </location>
</feature>
<feature type="active site" evidence="1">
    <location>
        <position position="47"/>
    </location>
</feature>
<feature type="active site" description="Proton acceptor" evidence="1">
    <location>
        <position position="93"/>
    </location>
</feature>
<feature type="binding site" evidence="1">
    <location>
        <position position="50"/>
    </location>
    <ligand>
        <name>ATP</name>
        <dbReference type="ChEBI" id="CHEBI:30616"/>
    </ligand>
</feature>
<feature type="binding site" evidence="1">
    <location>
        <position position="89"/>
    </location>
    <ligand>
        <name>ATP</name>
        <dbReference type="ChEBI" id="CHEBI:30616"/>
    </ligand>
</feature>
<feature type="binding site" evidence="1">
    <location>
        <position position="91"/>
    </location>
    <ligand>
        <name>Mg(2+)</name>
        <dbReference type="ChEBI" id="CHEBI:18420"/>
        <label>1</label>
    </ligand>
</feature>
<feature type="binding site" evidence="1">
    <location>
        <begin position="92"/>
        <end position="95"/>
    </location>
    <ligand>
        <name>substrate</name>
    </ligand>
</feature>
<feature type="binding site" evidence="1">
    <location>
        <position position="114"/>
    </location>
    <ligand>
        <name>substrate</name>
    </ligand>
</feature>
<feature type="binding site" evidence="1">
    <location>
        <position position="115"/>
    </location>
    <ligand>
        <name>Mg(2+)</name>
        <dbReference type="ChEBI" id="CHEBI:18420"/>
        <label>2</label>
    </ligand>
</feature>
<feature type="binding site" evidence="1">
    <location>
        <position position="238"/>
    </location>
    <ligand>
        <name>substrate</name>
    </ligand>
</feature>
<feature type="binding site" evidence="1">
    <location>
        <position position="266"/>
    </location>
    <ligand>
        <name>Mg(2+)</name>
        <dbReference type="ChEBI" id="CHEBI:18420"/>
        <label>2</label>
    </ligand>
</feature>
<feature type="binding site" evidence="1">
    <location>
        <begin position="310"/>
        <end position="312"/>
    </location>
    <ligand>
        <name>substrate</name>
    </ligand>
</feature>
<feature type="binding site" evidence="1">
    <location>
        <position position="522"/>
    </location>
    <ligand>
        <name>ATP</name>
        <dbReference type="ChEBI" id="CHEBI:30616"/>
    </ligand>
</feature>
<feature type="binding site" evidence="1">
    <location>
        <position position="559"/>
    </location>
    <ligand>
        <name>ATP</name>
        <dbReference type="ChEBI" id="CHEBI:30616"/>
    </ligand>
</feature>
<feature type="binding site" evidence="1">
    <location>
        <position position="560"/>
    </location>
    <ligand>
        <name>Mg(2+)</name>
        <dbReference type="ChEBI" id="CHEBI:18420"/>
        <label>1</label>
    </ligand>
</feature>
<feature type="binding site" evidence="1">
    <location>
        <position position="562"/>
    </location>
    <ligand>
        <name>substrate</name>
    </ligand>
</feature>
<organism>
    <name type="scientific">Prochlorococcus marinus (strain MIT 9303)</name>
    <dbReference type="NCBI Taxonomy" id="59922"/>
    <lineage>
        <taxon>Bacteria</taxon>
        <taxon>Bacillati</taxon>
        <taxon>Cyanobacteriota</taxon>
        <taxon>Cyanophyceae</taxon>
        <taxon>Synechococcales</taxon>
        <taxon>Prochlorococcaceae</taxon>
        <taxon>Prochlorococcus</taxon>
    </lineage>
</organism>
<dbReference type="EC" id="6.3.5.3" evidence="1"/>
<dbReference type="EMBL" id="CP000554">
    <property type="protein sequence ID" value="ABM76759.1"/>
    <property type="molecule type" value="Genomic_DNA"/>
</dbReference>
<dbReference type="RefSeq" id="WP_011824693.1">
    <property type="nucleotide sequence ID" value="NC_008820.1"/>
</dbReference>
<dbReference type="SMR" id="A2C5J9"/>
<dbReference type="STRING" id="59922.P9303_00021"/>
<dbReference type="KEGG" id="pmf:P9303_00021"/>
<dbReference type="HOGENOM" id="CLU_003100_0_1_3"/>
<dbReference type="BioCyc" id="PMAR59922:G1G80-3-MONOMER"/>
<dbReference type="UniPathway" id="UPA00074">
    <property type="reaction ID" value="UER00128"/>
</dbReference>
<dbReference type="Proteomes" id="UP000002274">
    <property type="component" value="Chromosome"/>
</dbReference>
<dbReference type="GO" id="GO:0005737">
    <property type="term" value="C:cytoplasm"/>
    <property type="evidence" value="ECO:0007669"/>
    <property type="project" value="UniProtKB-SubCell"/>
</dbReference>
<dbReference type="GO" id="GO:0005524">
    <property type="term" value="F:ATP binding"/>
    <property type="evidence" value="ECO:0007669"/>
    <property type="project" value="UniProtKB-UniRule"/>
</dbReference>
<dbReference type="GO" id="GO:0000287">
    <property type="term" value="F:magnesium ion binding"/>
    <property type="evidence" value="ECO:0007669"/>
    <property type="project" value="UniProtKB-UniRule"/>
</dbReference>
<dbReference type="GO" id="GO:0004642">
    <property type="term" value="F:phosphoribosylformylglycinamidine synthase activity"/>
    <property type="evidence" value="ECO:0007669"/>
    <property type="project" value="UniProtKB-UniRule"/>
</dbReference>
<dbReference type="GO" id="GO:0006189">
    <property type="term" value="P:'de novo' IMP biosynthetic process"/>
    <property type="evidence" value="ECO:0007669"/>
    <property type="project" value="UniProtKB-UniRule"/>
</dbReference>
<dbReference type="CDD" id="cd02203">
    <property type="entry name" value="PurL_repeat1"/>
    <property type="match status" value="1"/>
</dbReference>
<dbReference type="CDD" id="cd02204">
    <property type="entry name" value="PurL_repeat2"/>
    <property type="match status" value="1"/>
</dbReference>
<dbReference type="FunFam" id="3.30.1330.10:FF:000004">
    <property type="entry name" value="Phosphoribosylformylglycinamidine synthase subunit PurL"/>
    <property type="match status" value="1"/>
</dbReference>
<dbReference type="Gene3D" id="3.90.650.10">
    <property type="entry name" value="PurM-like C-terminal domain"/>
    <property type="match status" value="2"/>
</dbReference>
<dbReference type="Gene3D" id="3.30.1330.10">
    <property type="entry name" value="PurM-like, N-terminal domain"/>
    <property type="match status" value="2"/>
</dbReference>
<dbReference type="HAMAP" id="MF_00420">
    <property type="entry name" value="PurL_2"/>
    <property type="match status" value="1"/>
</dbReference>
<dbReference type="InterPro" id="IPR010074">
    <property type="entry name" value="PRibForGlyAmidine_synth_PurL"/>
</dbReference>
<dbReference type="InterPro" id="IPR041609">
    <property type="entry name" value="PurL_linker"/>
</dbReference>
<dbReference type="InterPro" id="IPR010918">
    <property type="entry name" value="PurM-like_C_dom"/>
</dbReference>
<dbReference type="InterPro" id="IPR036676">
    <property type="entry name" value="PurM-like_C_sf"/>
</dbReference>
<dbReference type="InterPro" id="IPR016188">
    <property type="entry name" value="PurM-like_N"/>
</dbReference>
<dbReference type="InterPro" id="IPR036921">
    <property type="entry name" value="PurM-like_N_sf"/>
</dbReference>
<dbReference type="NCBIfam" id="TIGR01736">
    <property type="entry name" value="FGAM_synth_II"/>
    <property type="match status" value="1"/>
</dbReference>
<dbReference type="NCBIfam" id="NF002290">
    <property type="entry name" value="PRK01213.1"/>
    <property type="match status" value="1"/>
</dbReference>
<dbReference type="PANTHER" id="PTHR43555">
    <property type="entry name" value="PHOSPHORIBOSYLFORMYLGLYCINAMIDINE SYNTHASE SUBUNIT PURL"/>
    <property type="match status" value="1"/>
</dbReference>
<dbReference type="PANTHER" id="PTHR43555:SF1">
    <property type="entry name" value="PHOSPHORIBOSYLFORMYLGLYCINAMIDINE SYNTHASE SUBUNIT PURL"/>
    <property type="match status" value="1"/>
</dbReference>
<dbReference type="Pfam" id="PF00586">
    <property type="entry name" value="AIRS"/>
    <property type="match status" value="2"/>
</dbReference>
<dbReference type="Pfam" id="PF02769">
    <property type="entry name" value="AIRS_C"/>
    <property type="match status" value="2"/>
</dbReference>
<dbReference type="Pfam" id="PF18072">
    <property type="entry name" value="FGAR-AT_linker"/>
    <property type="match status" value="1"/>
</dbReference>
<dbReference type="PIRSF" id="PIRSF001587">
    <property type="entry name" value="FGAM_synthase_II"/>
    <property type="match status" value="1"/>
</dbReference>
<dbReference type="SUPFAM" id="SSF56042">
    <property type="entry name" value="PurM C-terminal domain-like"/>
    <property type="match status" value="2"/>
</dbReference>
<dbReference type="SUPFAM" id="SSF55326">
    <property type="entry name" value="PurM N-terminal domain-like"/>
    <property type="match status" value="2"/>
</dbReference>
<proteinExistence type="inferred from homology"/>
<keyword id="KW-0067">ATP-binding</keyword>
<keyword id="KW-0963">Cytoplasm</keyword>
<keyword id="KW-0436">Ligase</keyword>
<keyword id="KW-0460">Magnesium</keyword>
<keyword id="KW-0479">Metal-binding</keyword>
<keyword id="KW-0547">Nucleotide-binding</keyword>
<keyword id="KW-0658">Purine biosynthesis</keyword>
<accession>A2C5J9</accession>